<proteinExistence type="inferred from homology"/>
<protein>
    <recommendedName>
        <fullName evidence="1">2-isopropylmalate synthase</fullName>
        <ecNumber evidence="1">2.3.3.13</ecNumber>
    </recommendedName>
    <alternativeName>
        <fullName evidence="1">Alpha-IPM synthase</fullName>
    </alternativeName>
    <alternativeName>
        <fullName evidence="1">Alpha-isopropylmalate synthase</fullName>
    </alternativeName>
</protein>
<gene>
    <name evidence="1" type="primary">leuA</name>
    <name type="ordered locus">Mpop_2796</name>
</gene>
<sequence>MANTTESAKDRVVIFDTTLRDGEQCPGATMTLDEKLAVAELLDAMGVDIIEAGFPIASNGDFEAVSEIARRTKRATIAGLARAIPADIARAGEAVRHAKAGRIHTFVSTSAIHLAHQMRKTQDEVIEIILKTVTQARDLVEDVEWSAMDATRTDIDYLCRCVEAAIRSGATTINLPDTVGYATPQEYGAMFRQVRERVPNSDKAIFSVHCHNDLGLAVANSLAGLEGGARQIECTVNGIGERAGNAALEEIVMAIRTRADVMPYDTGIDTTMLTRASKLVSHAANFPVQYNKAIVGRNAFAHESGIHQDGMLKHSETYEIMTPASVGLSKTSLVMGKHSGRAAFKSKLAELGISLSDNQFQDVFERFKDLADRKKHVYDEDIEALVDEKLATAHDRIKLLSLSVIAGTRGPQRATMKIEMDGRTFTEEADGNGPVDAVFNAIHEIVPHDAVLELYQVHAVTEGTDAQAEVSVRLKAGERSVTARGADPDTLVASAKAYLSALNKLSAASVRLHAQHAAVV</sequence>
<dbReference type="EC" id="2.3.3.13" evidence="1"/>
<dbReference type="EMBL" id="CP001029">
    <property type="protein sequence ID" value="ACB80951.1"/>
    <property type="molecule type" value="Genomic_DNA"/>
</dbReference>
<dbReference type="RefSeq" id="WP_012454673.1">
    <property type="nucleotide sequence ID" value="NC_010725.1"/>
</dbReference>
<dbReference type="SMR" id="B1ZDN3"/>
<dbReference type="STRING" id="441620.Mpop_2796"/>
<dbReference type="KEGG" id="mpo:Mpop_2796"/>
<dbReference type="eggNOG" id="COG0119">
    <property type="taxonomic scope" value="Bacteria"/>
</dbReference>
<dbReference type="HOGENOM" id="CLU_022158_0_1_5"/>
<dbReference type="OrthoDB" id="9803573at2"/>
<dbReference type="UniPathway" id="UPA00048">
    <property type="reaction ID" value="UER00070"/>
</dbReference>
<dbReference type="Proteomes" id="UP000007136">
    <property type="component" value="Chromosome"/>
</dbReference>
<dbReference type="GO" id="GO:0005829">
    <property type="term" value="C:cytosol"/>
    <property type="evidence" value="ECO:0007669"/>
    <property type="project" value="TreeGrafter"/>
</dbReference>
<dbReference type="GO" id="GO:0003852">
    <property type="term" value="F:2-isopropylmalate synthase activity"/>
    <property type="evidence" value="ECO:0007669"/>
    <property type="project" value="UniProtKB-UniRule"/>
</dbReference>
<dbReference type="GO" id="GO:0003985">
    <property type="term" value="F:acetyl-CoA C-acetyltransferase activity"/>
    <property type="evidence" value="ECO:0007669"/>
    <property type="project" value="UniProtKB-UniRule"/>
</dbReference>
<dbReference type="GO" id="GO:0030145">
    <property type="term" value="F:manganese ion binding"/>
    <property type="evidence" value="ECO:0007669"/>
    <property type="project" value="UniProtKB-UniRule"/>
</dbReference>
<dbReference type="GO" id="GO:0009098">
    <property type="term" value="P:L-leucine biosynthetic process"/>
    <property type="evidence" value="ECO:0007669"/>
    <property type="project" value="UniProtKB-UniRule"/>
</dbReference>
<dbReference type="CDD" id="cd07940">
    <property type="entry name" value="DRE_TIM_IPMS"/>
    <property type="match status" value="1"/>
</dbReference>
<dbReference type="FunFam" id="1.10.238.260:FF:000001">
    <property type="entry name" value="2-isopropylmalate synthase"/>
    <property type="match status" value="1"/>
</dbReference>
<dbReference type="FunFam" id="3.20.20.70:FF:000010">
    <property type="entry name" value="2-isopropylmalate synthase"/>
    <property type="match status" value="1"/>
</dbReference>
<dbReference type="FunFam" id="3.30.160.270:FF:000003">
    <property type="entry name" value="2-isopropylmalate synthase"/>
    <property type="match status" value="1"/>
</dbReference>
<dbReference type="Gene3D" id="1.10.238.260">
    <property type="match status" value="1"/>
</dbReference>
<dbReference type="Gene3D" id="3.30.160.270">
    <property type="match status" value="1"/>
</dbReference>
<dbReference type="Gene3D" id="3.20.20.70">
    <property type="entry name" value="Aldolase class I"/>
    <property type="match status" value="1"/>
</dbReference>
<dbReference type="HAMAP" id="MF_01025">
    <property type="entry name" value="LeuA_type1"/>
    <property type="match status" value="1"/>
</dbReference>
<dbReference type="InterPro" id="IPR050073">
    <property type="entry name" value="2-IPM_HCS-like"/>
</dbReference>
<dbReference type="InterPro" id="IPR013709">
    <property type="entry name" value="2-isopropylmalate_synth_dimer"/>
</dbReference>
<dbReference type="InterPro" id="IPR002034">
    <property type="entry name" value="AIPM/Hcit_synth_CS"/>
</dbReference>
<dbReference type="InterPro" id="IPR013785">
    <property type="entry name" value="Aldolase_TIM"/>
</dbReference>
<dbReference type="InterPro" id="IPR054691">
    <property type="entry name" value="LeuA/HCS_post-cat"/>
</dbReference>
<dbReference type="InterPro" id="IPR036230">
    <property type="entry name" value="LeuA_allosteric_dom_sf"/>
</dbReference>
<dbReference type="InterPro" id="IPR005671">
    <property type="entry name" value="LeuA_bact_synth"/>
</dbReference>
<dbReference type="InterPro" id="IPR000891">
    <property type="entry name" value="PYR_CT"/>
</dbReference>
<dbReference type="NCBIfam" id="TIGR00973">
    <property type="entry name" value="leuA_bact"/>
    <property type="match status" value="1"/>
</dbReference>
<dbReference type="NCBIfam" id="NF002086">
    <property type="entry name" value="PRK00915.1-3"/>
    <property type="match status" value="1"/>
</dbReference>
<dbReference type="NCBIfam" id="NF002087">
    <property type="entry name" value="PRK00915.1-4"/>
    <property type="match status" value="1"/>
</dbReference>
<dbReference type="PANTHER" id="PTHR10277:SF9">
    <property type="entry name" value="2-ISOPROPYLMALATE SYNTHASE 1, CHLOROPLASTIC-RELATED"/>
    <property type="match status" value="1"/>
</dbReference>
<dbReference type="PANTHER" id="PTHR10277">
    <property type="entry name" value="HOMOCITRATE SYNTHASE-RELATED"/>
    <property type="match status" value="1"/>
</dbReference>
<dbReference type="Pfam" id="PF22617">
    <property type="entry name" value="HCS_D2"/>
    <property type="match status" value="1"/>
</dbReference>
<dbReference type="Pfam" id="PF00682">
    <property type="entry name" value="HMGL-like"/>
    <property type="match status" value="1"/>
</dbReference>
<dbReference type="Pfam" id="PF08502">
    <property type="entry name" value="LeuA_dimer"/>
    <property type="match status" value="1"/>
</dbReference>
<dbReference type="SMART" id="SM00917">
    <property type="entry name" value="LeuA_dimer"/>
    <property type="match status" value="1"/>
</dbReference>
<dbReference type="SUPFAM" id="SSF110921">
    <property type="entry name" value="2-isopropylmalate synthase LeuA, allosteric (dimerisation) domain"/>
    <property type="match status" value="1"/>
</dbReference>
<dbReference type="SUPFAM" id="SSF51569">
    <property type="entry name" value="Aldolase"/>
    <property type="match status" value="1"/>
</dbReference>
<dbReference type="PROSITE" id="PS00815">
    <property type="entry name" value="AIPM_HOMOCIT_SYNTH_1"/>
    <property type="match status" value="1"/>
</dbReference>
<dbReference type="PROSITE" id="PS00816">
    <property type="entry name" value="AIPM_HOMOCIT_SYNTH_2"/>
    <property type="match status" value="1"/>
</dbReference>
<dbReference type="PROSITE" id="PS50991">
    <property type="entry name" value="PYR_CT"/>
    <property type="match status" value="1"/>
</dbReference>
<evidence type="ECO:0000255" key="1">
    <source>
        <dbReference type="HAMAP-Rule" id="MF_01025"/>
    </source>
</evidence>
<comment type="function">
    <text evidence="1">Catalyzes the condensation of the acetyl group of acetyl-CoA with 3-methyl-2-oxobutanoate (2-ketoisovalerate) to form 3-carboxy-3-hydroxy-4-methylpentanoate (2-isopropylmalate).</text>
</comment>
<comment type="catalytic activity">
    <reaction evidence="1">
        <text>3-methyl-2-oxobutanoate + acetyl-CoA + H2O = (2S)-2-isopropylmalate + CoA + H(+)</text>
        <dbReference type="Rhea" id="RHEA:21524"/>
        <dbReference type="ChEBI" id="CHEBI:1178"/>
        <dbReference type="ChEBI" id="CHEBI:11851"/>
        <dbReference type="ChEBI" id="CHEBI:15377"/>
        <dbReference type="ChEBI" id="CHEBI:15378"/>
        <dbReference type="ChEBI" id="CHEBI:57287"/>
        <dbReference type="ChEBI" id="CHEBI:57288"/>
        <dbReference type="EC" id="2.3.3.13"/>
    </reaction>
</comment>
<comment type="cofactor">
    <cofactor evidence="1">
        <name>Mn(2+)</name>
        <dbReference type="ChEBI" id="CHEBI:29035"/>
    </cofactor>
</comment>
<comment type="pathway">
    <text evidence="1">Amino-acid biosynthesis; L-leucine biosynthesis; L-leucine from 3-methyl-2-oxobutanoate: step 1/4.</text>
</comment>
<comment type="subunit">
    <text evidence="1">Homodimer.</text>
</comment>
<comment type="subcellular location">
    <subcellularLocation>
        <location evidence="1">Cytoplasm</location>
    </subcellularLocation>
</comment>
<comment type="similarity">
    <text evidence="1">Belongs to the alpha-IPM synthase/homocitrate synthase family. LeuA type 1 subfamily.</text>
</comment>
<accession>B1ZDN3</accession>
<organism>
    <name type="scientific">Methylorubrum populi (strain ATCC BAA-705 / NCIMB 13946 / BJ001)</name>
    <name type="common">Methylobacterium populi</name>
    <dbReference type="NCBI Taxonomy" id="441620"/>
    <lineage>
        <taxon>Bacteria</taxon>
        <taxon>Pseudomonadati</taxon>
        <taxon>Pseudomonadota</taxon>
        <taxon>Alphaproteobacteria</taxon>
        <taxon>Hyphomicrobiales</taxon>
        <taxon>Methylobacteriaceae</taxon>
        <taxon>Methylorubrum</taxon>
    </lineage>
</organism>
<feature type="chain" id="PRO_1000149222" description="2-isopropylmalate synthase">
    <location>
        <begin position="1"/>
        <end position="520"/>
    </location>
</feature>
<feature type="domain" description="Pyruvate carboxyltransferase" evidence="1">
    <location>
        <begin position="12"/>
        <end position="274"/>
    </location>
</feature>
<feature type="region of interest" description="Regulatory domain" evidence="1">
    <location>
        <begin position="398"/>
        <end position="520"/>
    </location>
</feature>
<feature type="binding site" evidence="1">
    <location>
        <position position="21"/>
    </location>
    <ligand>
        <name>Mn(2+)</name>
        <dbReference type="ChEBI" id="CHEBI:29035"/>
    </ligand>
</feature>
<feature type="binding site" evidence="1">
    <location>
        <position position="209"/>
    </location>
    <ligand>
        <name>Mn(2+)</name>
        <dbReference type="ChEBI" id="CHEBI:29035"/>
    </ligand>
</feature>
<feature type="binding site" evidence="1">
    <location>
        <position position="211"/>
    </location>
    <ligand>
        <name>Mn(2+)</name>
        <dbReference type="ChEBI" id="CHEBI:29035"/>
    </ligand>
</feature>
<feature type="binding site" evidence="1">
    <location>
        <position position="245"/>
    </location>
    <ligand>
        <name>Mn(2+)</name>
        <dbReference type="ChEBI" id="CHEBI:29035"/>
    </ligand>
</feature>
<keyword id="KW-0028">Amino-acid biosynthesis</keyword>
<keyword id="KW-0100">Branched-chain amino acid biosynthesis</keyword>
<keyword id="KW-0963">Cytoplasm</keyword>
<keyword id="KW-0432">Leucine biosynthesis</keyword>
<keyword id="KW-0464">Manganese</keyword>
<keyword id="KW-0479">Metal-binding</keyword>
<keyword id="KW-0808">Transferase</keyword>
<reference key="1">
    <citation type="submission" date="2008-04" db="EMBL/GenBank/DDBJ databases">
        <title>Complete sequence of chromosome of Methylobacterium populi BJ001.</title>
        <authorList>
            <consortium name="US DOE Joint Genome Institute"/>
            <person name="Copeland A."/>
            <person name="Lucas S."/>
            <person name="Lapidus A."/>
            <person name="Glavina del Rio T."/>
            <person name="Dalin E."/>
            <person name="Tice H."/>
            <person name="Bruce D."/>
            <person name="Goodwin L."/>
            <person name="Pitluck S."/>
            <person name="Chertkov O."/>
            <person name="Brettin T."/>
            <person name="Detter J.C."/>
            <person name="Han C."/>
            <person name="Kuske C.R."/>
            <person name="Schmutz J."/>
            <person name="Larimer F."/>
            <person name="Land M."/>
            <person name="Hauser L."/>
            <person name="Kyrpides N."/>
            <person name="Mikhailova N."/>
            <person name="Marx C."/>
            <person name="Richardson P."/>
        </authorList>
    </citation>
    <scope>NUCLEOTIDE SEQUENCE [LARGE SCALE GENOMIC DNA]</scope>
    <source>
        <strain>ATCC BAA-705 / NCIMB 13946 / BJ001</strain>
    </source>
</reference>
<name>LEU1_METPB</name>